<sequence>MAKNYYDITLALAGICQSARLVQQLAHEGQCDNDALNTVLRGLLQTNPSSTLAVYGDTEQVLKMGLETLQSVLNANRQGEAAELTRYTLSLMVLERKLSASKSAMNTLGERISQLDRQLAHFDLESETMMSSLASIYVDVVSPLGPRIQVTGSPAILQSPLVQAKVRATLLAGIRSAVLWQQVGGSRLQLMFSRNRLFKQAQSILAHT</sequence>
<proteinExistence type="inferred from homology"/>
<evidence type="ECO:0000255" key="1">
    <source>
        <dbReference type="HAMAP-Rule" id="MF_00695"/>
    </source>
</evidence>
<reference key="1">
    <citation type="journal article" date="2004" name="Proc. Natl. Acad. Sci. U.S.A.">
        <title>Insights into the evolution of Yersinia pestis through whole-genome comparison with Yersinia pseudotuberculosis.</title>
        <authorList>
            <person name="Chain P.S.G."/>
            <person name="Carniel E."/>
            <person name="Larimer F.W."/>
            <person name="Lamerdin J."/>
            <person name="Stoutland P.O."/>
            <person name="Regala W.M."/>
            <person name="Georgescu A.M."/>
            <person name="Vergez L.M."/>
            <person name="Land M.L."/>
            <person name="Motin V.L."/>
            <person name="Brubaker R.R."/>
            <person name="Fowler J."/>
            <person name="Hinnebusch J."/>
            <person name="Marceau M."/>
            <person name="Medigue C."/>
            <person name="Simonet M."/>
            <person name="Chenal-Francisque V."/>
            <person name="Souza B."/>
            <person name="Dacheux D."/>
            <person name="Elliott J.M."/>
            <person name="Derbise A."/>
            <person name="Hauser L.J."/>
            <person name="Garcia E."/>
        </authorList>
    </citation>
    <scope>NUCLEOTIDE SEQUENCE [LARGE SCALE GENOMIC DNA]</scope>
    <source>
        <strain>IP32953</strain>
    </source>
</reference>
<organism>
    <name type="scientific">Yersinia pseudotuberculosis serotype I (strain IP32953)</name>
    <dbReference type="NCBI Taxonomy" id="273123"/>
    <lineage>
        <taxon>Bacteria</taxon>
        <taxon>Pseudomonadati</taxon>
        <taxon>Pseudomonadota</taxon>
        <taxon>Gammaproteobacteria</taxon>
        <taxon>Enterobacterales</taxon>
        <taxon>Yersiniaceae</taxon>
        <taxon>Yersinia</taxon>
    </lineage>
</organism>
<keyword id="KW-0997">Cell inner membrane</keyword>
<keyword id="KW-1003">Cell membrane</keyword>
<keyword id="KW-0963">Cytoplasm</keyword>
<keyword id="KW-0472">Membrane</keyword>
<gene>
    <name evidence="1" type="primary">hflD</name>
    <name type="ordered locus">YPTB2431</name>
</gene>
<dbReference type="EMBL" id="BX936398">
    <property type="protein sequence ID" value="CAH21669.1"/>
    <property type="molecule type" value="Genomic_DNA"/>
</dbReference>
<dbReference type="RefSeq" id="WP_002210914.1">
    <property type="nucleotide sequence ID" value="NZ_CP009712.1"/>
</dbReference>
<dbReference type="SMR" id="Q669Q3"/>
<dbReference type="GeneID" id="57976936"/>
<dbReference type="KEGG" id="ypo:BZ17_19"/>
<dbReference type="KEGG" id="yps:YPTB2431"/>
<dbReference type="PATRIC" id="fig|273123.14.peg.20"/>
<dbReference type="Proteomes" id="UP000001011">
    <property type="component" value="Chromosome"/>
</dbReference>
<dbReference type="GO" id="GO:0005737">
    <property type="term" value="C:cytoplasm"/>
    <property type="evidence" value="ECO:0007669"/>
    <property type="project" value="UniProtKB-SubCell"/>
</dbReference>
<dbReference type="GO" id="GO:0005886">
    <property type="term" value="C:plasma membrane"/>
    <property type="evidence" value="ECO:0007669"/>
    <property type="project" value="UniProtKB-SubCell"/>
</dbReference>
<dbReference type="FunFam" id="1.10.3890.10:FF:000001">
    <property type="entry name" value="High frequency lysogenization protein HflD homolog"/>
    <property type="match status" value="1"/>
</dbReference>
<dbReference type="Gene3D" id="1.10.3890.10">
    <property type="entry name" value="HflD-like"/>
    <property type="match status" value="1"/>
</dbReference>
<dbReference type="HAMAP" id="MF_00695">
    <property type="entry name" value="HflD_protein"/>
    <property type="match status" value="1"/>
</dbReference>
<dbReference type="InterPro" id="IPR007451">
    <property type="entry name" value="HflD"/>
</dbReference>
<dbReference type="InterPro" id="IPR035932">
    <property type="entry name" value="HflD-like_sf"/>
</dbReference>
<dbReference type="NCBIfam" id="NF001246">
    <property type="entry name" value="PRK00218.1-2"/>
    <property type="match status" value="1"/>
</dbReference>
<dbReference type="NCBIfam" id="NF001248">
    <property type="entry name" value="PRK00218.1-4"/>
    <property type="match status" value="1"/>
</dbReference>
<dbReference type="NCBIfam" id="NF001249">
    <property type="entry name" value="PRK00218.1-5"/>
    <property type="match status" value="1"/>
</dbReference>
<dbReference type="PANTHER" id="PTHR38100">
    <property type="entry name" value="HIGH FREQUENCY LYSOGENIZATION PROTEIN HFLD"/>
    <property type="match status" value="1"/>
</dbReference>
<dbReference type="PANTHER" id="PTHR38100:SF1">
    <property type="entry name" value="HIGH FREQUENCY LYSOGENIZATION PROTEIN HFLD"/>
    <property type="match status" value="1"/>
</dbReference>
<dbReference type="Pfam" id="PF04356">
    <property type="entry name" value="DUF489"/>
    <property type="match status" value="1"/>
</dbReference>
<dbReference type="SUPFAM" id="SSF101322">
    <property type="entry name" value="YcfC-like"/>
    <property type="match status" value="1"/>
</dbReference>
<protein>
    <recommendedName>
        <fullName evidence="1">High frequency lysogenization protein HflD homolog</fullName>
    </recommendedName>
</protein>
<comment type="subcellular location">
    <subcellularLocation>
        <location>Cytoplasm</location>
    </subcellularLocation>
    <subcellularLocation>
        <location evidence="1">Cell inner membrane</location>
        <topology evidence="1">Peripheral membrane protein</topology>
        <orientation evidence="1">Cytoplasmic side</orientation>
    </subcellularLocation>
</comment>
<comment type="similarity">
    <text evidence="1">Belongs to the HflD family.</text>
</comment>
<feature type="chain" id="PRO_1000045459" description="High frequency lysogenization protein HflD homolog">
    <location>
        <begin position="1"/>
        <end position="208"/>
    </location>
</feature>
<name>HFLD_YERPS</name>
<accession>Q669Q3</accession>